<organism>
    <name type="scientific">Escherichia coli (strain K12 / DH10B)</name>
    <dbReference type="NCBI Taxonomy" id="316385"/>
    <lineage>
        <taxon>Bacteria</taxon>
        <taxon>Pseudomonadati</taxon>
        <taxon>Pseudomonadota</taxon>
        <taxon>Gammaproteobacteria</taxon>
        <taxon>Enterobacterales</taxon>
        <taxon>Enterobacteriaceae</taxon>
        <taxon>Escherichia</taxon>
    </lineage>
</organism>
<comment type="function">
    <text evidence="1">NDH-1 shuttles electrons from NADH, via FMN and iron-sulfur (Fe-S) centers, to quinones in the respiratory chain. The immediate electron acceptor for the enzyme in this species is believed to be ubiquinone. Couples the redox reaction to proton translocation (for every two electrons transferred, four hydrogen ions are translocated across the cytoplasmic membrane), and thus conserves the redox energy in a proton gradient.</text>
</comment>
<comment type="catalytic activity">
    <reaction evidence="1">
        <text>a quinone + NADH + 5 H(+)(in) = a quinol + NAD(+) + 4 H(+)(out)</text>
        <dbReference type="Rhea" id="RHEA:57888"/>
        <dbReference type="ChEBI" id="CHEBI:15378"/>
        <dbReference type="ChEBI" id="CHEBI:24646"/>
        <dbReference type="ChEBI" id="CHEBI:57540"/>
        <dbReference type="ChEBI" id="CHEBI:57945"/>
        <dbReference type="ChEBI" id="CHEBI:132124"/>
    </reaction>
</comment>
<comment type="subunit">
    <text evidence="1">NDH-1 is composed of 13 different subunits. Subunits NuoB, CD, E, F, and G constitute the peripheral sector of the complex.</text>
</comment>
<comment type="subcellular location">
    <subcellularLocation>
        <location evidence="1">Cell inner membrane</location>
        <topology evidence="1">Peripheral membrane protein</topology>
        <orientation evidence="1">Cytoplasmic side</orientation>
    </subcellularLocation>
</comment>
<comment type="similarity">
    <text evidence="1">In the N-terminal section; belongs to the complex I 30 kDa subunit family.</text>
</comment>
<comment type="similarity">
    <text evidence="1">In the C-terminal section; belongs to the complex I 49 kDa subunit family.</text>
</comment>
<gene>
    <name evidence="1" type="primary">nuoC</name>
    <name evidence="1" type="synonym">nuoCD</name>
    <name evidence="1" type="synonym">nuoD</name>
    <name type="ordered locus">ECDH10B_2448</name>
</gene>
<name>NUOCD_ECODH</name>
<sequence>MVNNMTDLTAQEPAWQTRDHLDDPVIGELRNRFGPDAFTVQATRTGVPVVWIKREQLLEVGDFLKKLPKPYVMLFDLHGMDERLRTHREGLPAADFSVFYHLISIDRNRDIMLKVALAENDLHVPTFTKLFPNANWYERETWDLFGITFDGHPNLRRIMMPQTWKGHPLRKDYPARATEFSPFELTKAKQDLEMEALTFKPEEWGMKRGTENEDFMFLNLGPNHPSAHGAFRIVLQLDGEEIVDCVPDIGYHHRGAEKMGERQSWHSYIPYTDRIEYLGGCVNEMPYVLAVEKLAGITVPDRVNVIRVMLSELFRINSHLLYISTFIQDVGAMTPVFFAFTDRQKIYDLVEAITGFRMHPAWFRIGGVAHDLPRGWDRLLREFLDWMPKRLASYEKAALQNTILKGRSQGVAAYGAKEALEWGTTGAGLRATGIDFDVRKARPYSGYENFDFEIPVGGGVSDCYTRVMLKVEELRQSLRILEQCLNNMPEGPFKADHPLTTPPPKERTLQHIETLITHFLQVSWGPVMPANESFQMIEATKGINSYYLTSDGSTMSYRTRVRTPSFAHLQQIPAAIRGSLVSDLIVYLGSIDFVMSDVDR</sequence>
<accession>B1X8Z8</accession>
<proteinExistence type="inferred from homology"/>
<feature type="chain" id="PRO_0000358633" description="NADH-quinone oxidoreductase subunit C/D">
    <location>
        <begin position="1"/>
        <end position="600"/>
    </location>
</feature>
<feature type="region of interest" description="NADH dehydrogenase I subunit C" evidence="1">
    <location>
        <begin position="1"/>
        <end position="190"/>
    </location>
</feature>
<feature type="region of interest" description="NADH dehydrogenase I subunit D" evidence="1">
    <location>
        <begin position="214"/>
        <end position="600"/>
    </location>
</feature>
<dbReference type="EC" id="7.1.1.-" evidence="1"/>
<dbReference type="EMBL" id="CP000948">
    <property type="protein sequence ID" value="ACB03445.1"/>
    <property type="molecule type" value="Genomic_DNA"/>
</dbReference>
<dbReference type="SMR" id="B1X8Z8"/>
<dbReference type="KEGG" id="ecd:ECDH10B_2448"/>
<dbReference type="HOGENOM" id="CLU_015134_3_2_6"/>
<dbReference type="GO" id="GO:0030964">
    <property type="term" value="C:NADH dehydrogenase complex"/>
    <property type="evidence" value="ECO:0007669"/>
    <property type="project" value="InterPro"/>
</dbReference>
<dbReference type="GO" id="GO:0005886">
    <property type="term" value="C:plasma membrane"/>
    <property type="evidence" value="ECO:0007669"/>
    <property type="project" value="UniProtKB-SubCell"/>
</dbReference>
<dbReference type="GO" id="GO:0051287">
    <property type="term" value="F:NAD binding"/>
    <property type="evidence" value="ECO:0007669"/>
    <property type="project" value="InterPro"/>
</dbReference>
<dbReference type="GO" id="GO:0008137">
    <property type="term" value="F:NADH dehydrogenase (ubiquinone) activity"/>
    <property type="evidence" value="ECO:0007669"/>
    <property type="project" value="InterPro"/>
</dbReference>
<dbReference type="GO" id="GO:0050136">
    <property type="term" value="F:NADH:ubiquinone reductase (non-electrogenic) activity"/>
    <property type="evidence" value="ECO:0007669"/>
    <property type="project" value="UniProtKB-UniRule"/>
</dbReference>
<dbReference type="GO" id="GO:0048038">
    <property type="term" value="F:quinone binding"/>
    <property type="evidence" value="ECO:0007669"/>
    <property type="project" value="UniProtKB-KW"/>
</dbReference>
<dbReference type="FunFam" id="1.10.645.10:FF:000001">
    <property type="entry name" value="NADH-quinone oxidoreductase subunit C/D"/>
    <property type="match status" value="1"/>
</dbReference>
<dbReference type="FunFam" id="3.30.460.80:FF:000001">
    <property type="entry name" value="NADH-quinone oxidoreductase subunit C/D"/>
    <property type="match status" value="1"/>
</dbReference>
<dbReference type="Gene3D" id="1.10.645.10">
    <property type="entry name" value="Cytochrome-c3 Hydrogenase, chain B"/>
    <property type="match status" value="1"/>
</dbReference>
<dbReference type="Gene3D" id="3.30.460.80">
    <property type="entry name" value="NADH:ubiquinone oxidoreductase, 30kDa subunit"/>
    <property type="match status" value="1"/>
</dbReference>
<dbReference type="HAMAP" id="MF_01357">
    <property type="entry name" value="NDH1_NuoC"/>
    <property type="match status" value="1"/>
</dbReference>
<dbReference type="HAMAP" id="MF_01359">
    <property type="entry name" value="NDH1_NuoCD_1"/>
    <property type="match status" value="1"/>
</dbReference>
<dbReference type="HAMAP" id="MF_01358">
    <property type="entry name" value="NDH1_NuoD"/>
    <property type="match status" value="1"/>
</dbReference>
<dbReference type="InterPro" id="IPR010218">
    <property type="entry name" value="NADH_DH_suC"/>
</dbReference>
<dbReference type="InterPro" id="IPR023062">
    <property type="entry name" value="NADH_DH_suCD"/>
</dbReference>
<dbReference type="InterPro" id="IPR001135">
    <property type="entry name" value="NADH_Q_OxRdtase_suD"/>
</dbReference>
<dbReference type="InterPro" id="IPR037232">
    <property type="entry name" value="NADH_quin_OxRdtase_su_C/D-like"/>
</dbReference>
<dbReference type="InterPro" id="IPR001268">
    <property type="entry name" value="NADH_UbQ_OxRdtase_30kDa_su"/>
</dbReference>
<dbReference type="InterPro" id="IPR014029">
    <property type="entry name" value="NADH_UbQ_OxRdtase_49kDa_CS"/>
</dbReference>
<dbReference type="InterPro" id="IPR020396">
    <property type="entry name" value="NADH_UbQ_OxRdtase_CS"/>
</dbReference>
<dbReference type="InterPro" id="IPR022885">
    <property type="entry name" value="NDH1_su_D/H"/>
</dbReference>
<dbReference type="InterPro" id="IPR029014">
    <property type="entry name" value="NiFe-Hase_large"/>
</dbReference>
<dbReference type="NCBIfam" id="TIGR01961">
    <property type="entry name" value="NuoC_fam"/>
    <property type="match status" value="1"/>
</dbReference>
<dbReference type="NCBIfam" id="TIGR01962">
    <property type="entry name" value="NuoD"/>
    <property type="match status" value="1"/>
</dbReference>
<dbReference type="NCBIfam" id="NF004739">
    <property type="entry name" value="PRK06075.1"/>
    <property type="match status" value="1"/>
</dbReference>
<dbReference type="NCBIfam" id="NF008728">
    <property type="entry name" value="PRK11742.1"/>
    <property type="match status" value="1"/>
</dbReference>
<dbReference type="PANTHER" id="PTHR11993:SF45">
    <property type="entry name" value="NADH-QUINONE OXIDOREDUCTASE SUBUNIT C_D"/>
    <property type="match status" value="1"/>
</dbReference>
<dbReference type="PANTHER" id="PTHR11993">
    <property type="entry name" value="NADH-UBIQUINONE OXIDOREDUCTASE 49 KDA SUBUNIT"/>
    <property type="match status" value="1"/>
</dbReference>
<dbReference type="Pfam" id="PF00329">
    <property type="entry name" value="Complex1_30kDa"/>
    <property type="match status" value="1"/>
</dbReference>
<dbReference type="Pfam" id="PF00346">
    <property type="entry name" value="Complex1_49kDa"/>
    <property type="match status" value="1"/>
</dbReference>
<dbReference type="SUPFAM" id="SSF56762">
    <property type="entry name" value="HydB/Nqo4-like"/>
    <property type="match status" value="1"/>
</dbReference>
<dbReference type="SUPFAM" id="SSF143243">
    <property type="entry name" value="Nqo5-like"/>
    <property type="match status" value="1"/>
</dbReference>
<dbReference type="PROSITE" id="PS00542">
    <property type="entry name" value="COMPLEX1_30K"/>
    <property type="match status" value="1"/>
</dbReference>
<dbReference type="PROSITE" id="PS00535">
    <property type="entry name" value="COMPLEX1_49K"/>
    <property type="match status" value="1"/>
</dbReference>
<keyword id="KW-0997">Cell inner membrane</keyword>
<keyword id="KW-1003">Cell membrane</keyword>
<keyword id="KW-0472">Membrane</keyword>
<keyword id="KW-0511">Multifunctional enzyme</keyword>
<keyword id="KW-0520">NAD</keyword>
<keyword id="KW-0874">Quinone</keyword>
<keyword id="KW-1278">Translocase</keyword>
<keyword id="KW-0813">Transport</keyword>
<keyword id="KW-0830">Ubiquinone</keyword>
<reference key="1">
    <citation type="journal article" date="2008" name="J. Bacteriol.">
        <title>The complete genome sequence of Escherichia coli DH10B: insights into the biology of a laboratory workhorse.</title>
        <authorList>
            <person name="Durfee T."/>
            <person name="Nelson R."/>
            <person name="Baldwin S."/>
            <person name="Plunkett G. III"/>
            <person name="Burland V."/>
            <person name="Mau B."/>
            <person name="Petrosino J.F."/>
            <person name="Qin X."/>
            <person name="Muzny D.M."/>
            <person name="Ayele M."/>
            <person name="Gibbs R.A."/>
            <person name="Csorgo B."/>
            <person name="Posfai G."/>
            <person name="Weinstock G.M."/>
            <person name="Blattner F.R."/>
        </authorList>
    </citation>
    <scope>NUCLEOTIDE SEQUENCE [LARGE SCALE GENOMIC DNA]</scope>
    <source>
        <strain>K12 / DH10B</strain>
    </source>
</reference>
<protein>
    <recommendedName>
        <fullName evidence="1">NADH-quinone oxidoreductase subunit C/D</fullName>
        <ecNumber evidence="1">7.1.1.-</ecNumber>
    </recommendedName>
    <alternativeName>
        <fullName evidence="1">NADH dehydrogenase I subunit C/D</fullName>
    </alternativeName>
    <alternativeName>
        <fullName evidence="1">NDH-1 subunit C/D</fullName>
    </alternativeName>
</protein>
<evidence type="ECO:0000255" key="1">
    <source>
        <dbReference type="HAMAP-Rule" id="MF_01359"/>
    </source>
</evidence>